<comment type="function">
    <text evidence="1">Responsible for the transport of dicarboxylates such as succinate, fumarate, and malate from the periplasm across the membrane.</text>
</comment>
<comment type="subcellular location">
    <subcellularLocation>
        <location evidence="1">Cell inner membrane</location>
        <topology evidence="1">Multi-pass membrane protein</topology>
    </subcellularLocation>
</comment>
<comment type="similarity">
    <text evidence="1">Belongs to the dicarboxylate/amino acid:cation symporter (DAACS) (TC 2.A.23) family.</text>
</comment>
<feature type="chain" id="PRO_0000322007" description="C4-dicarboxylate transport protein">
    <location>
        <begin position="1"/>
        <end position="439"/>
    </location>
</feature>
<feature type="transmembrane region" description="Helical" evidence="1">
    <location>
        <begin position="10"/>
        <end position="30"/>
    </location>
</feature>
<feature type="transmembrane region" description="Helical" evidence="1">
    <location>
        <begin position="45"/>
        <end position="65"/>
    </location>
</feature>
<feature type="transmembrane region" description="Helical" evidence="1">
    <location>
        <begin position="77"/>
        <end position="97"/>
    </location>
</feature>
<feature type="transmembrane region" description="Helical" evidence="1">
    <location>
        <begin position="145"/>
        <end position="165"/>
    </location>
</feature>
<feature type="transmembrane region" description="Helical" evidence="1">
    <location>
        <begin position="185"/>
        <end position="205"/>
    </location>
</feature>
<feature type="transmembrane region" description="Helical" evidence="1">
    <location>
        <begin position="223"/>
        <end position="243"/>
    </location>
</feature>
<feature type="transmembrane region" description="Helical" evidence="1">
    <location>
        <begin position="290"/>
        <end position="310"/>
    </location>
</feature>
<feature type="transmembrane region" description="Helical" evidence="1">
    <location>
        <begin position="332"/>
        <end position="352"/>
    </location>
</feature>
<feature type="transmembrane region" description="Helical" evidence="1">
    <location>
        <begin position="353"/>
        <end position="373"/>
    </location>
</feature>
<feature type="region of interest" description="Disordered" evidence="2">
    <location>
        <begin position="415"/>
        <end position="439"/>
    </location>
</feature>
<protein>
    <recommendedName>
        <fullName evidence="1">C4-dicarboxylate transport protein</fullName>
    </recommendedName>
</protein>
<keyword id="KW-0997">Cell inner membrane</keyword>
<keyword id="KW-1003">Cell membrane</keyword>
<keyword id="KW-0472">Membrane</keyword>
<keyword id="KW-1185">Reference proteome</keyword>
<keyword id="KW-0769">Symport</keyword>
<keyword id="KW-0812">Transmembrane</keyword>
<keyword id="KW-1133">Transmembrane helix</keyword>
<keyword id="KW-0813">Transport</keyword>
<reference key="1">
    <citation type="submission" date="2006-12" db="EMBL/GenBank/DDBJ databases">
        <title>Complete sequence of chromosome 1 of Verminephrobacter eiseniae EF01-2.</title>
        <authorList>
            <person name="Copeland A."/>
            <person name="Lucas S."/>
            <person name="Lapidus A."/>
            <person name="Barry K."/>
            <person name="Detter J.C."/>
            <person name="Glavina del Rio T."/>
            <person name="Dalin E."/>
            <person name="Tice H."/>
            <person name="Pitluck S."/>
            <person name="Chertkov O."/>
            <person name="Brettin T."/>
            <person name="Bruce D."/>
            <person name="Han C."/>
            <person name="Tapia R."/>
            <person name="Gilna P."/>
            <person name="Schmutz J."/>
            <person name="Larimer F."/>
            <person name="Land M."/>
            <person name="Hauser L."/>
            <person name="Kyrpides N."/>
            <person name="Kim E."/>
            <person name="Stahl D."/>
            <person name="Richardson P."/>
        </authorList>
    </citation>
    <scope>NUCLEOTIDE SEQUENCE [LARGE SCALE GENOMIC DNA]</scope>
    <source>
        <strain>EF01-2</strain>
    </source>
</reference>
<proteinExistence type="inferred from homology"/>
<accession>A1WIY6</accession>
<dbReference type="EMBL" id="CP000542">
    <property type="protein sequence ID" value="ABM57593.1"/>
    <property type="molecule type" value="Genomic_DNA"/>
</dbReference>
<dbReference type="RefSeq" id="WP_011809599.1">
    <property type="nucleotide sequence ID" value="NC_008786.1"/>
</dbReference>
<dbReference type="SMR" id="A1WIY6"/>
<dbReference type="STRING" id="391735.Veis_1840"/>
<dbReference type="GeneID" id="76460442"/>
<dbReference type="KEGG" id="vei:Veis_1840"/>
<dbReference type="eggNOG" id="COG1301">
    <property type="taxonomic scope" value="Bacteria"/>
</dbReference>
<dbReference type="HOGENOM" id="CLU_019375_7_0_4"/>
<dbReference type="OrthoDB" id="9766690at2"/>
<dbReference type="Proteomes" id="UP000000374">
    <property type="component" value="Chromosome"/>
</dbReference>
<dbReference type="GO" id="GO:0005886">
    <property type="term" value="C:plasma membrane"/>
    <property type="evidence" value="ECO:0007669"/>
    <property type="project" value="UniProtKB-SubCell"/>
</dbReference>
<dbReference type="GO" id="GO:0015138">
    <property type="term" value="F:fumarate transmembrane transporter activity"/>
    <property type="evidence" value="ECO:0007669"/>
    <property type="project" value="TreeGrafter"/>
</dbReference>
<dbReference type="GO" id="GO:0015366">
    <property type="term" value="F:malate:proton symporter activity"/>
    <property type="evidence" value="ECO:0007669"/>
    <property type="project" value="TreeGrafter"/>
</dbReference>
<dbReference type="GO" id="GO:0015141">
    <property type="term" value="F:succinate transmembrane transporter activity"/>
    <property type="evidence" value="ECO:0007669"/>
    <property type="project" value="TreeGrafter"/>
</dbReference>
<dbReference type="GO" id="GO:0070778">
    <property type="term" value="P:L-aspartate transmembrane transport"/>
    <property type="evidence" value="ECO:0007669"/>
    <property type="project" value="TreeGrafter"/>
</dbReference>
<dbReference type="FunFam" id="1.10.3860.10:FF:000001">
    <property type="entry name" value="C4-dicarboxylate transport protein"/>
    <property type="match status" value="1"/>
</dbReference>
<dbReference type="Gene3D" id="1.10.3860.10">
    <property type="entry name" value="Sodium:dicarboxylate symporter"/>
    <property type="match status" value="1"/>
</dbReference>
<dbReference type="HAMAP" id="MF_01300">
    <property type="entry name" value="C4_dicarb_transport"/>
    <property type="match status" value="1"/>
</dbReference>
<dbReference type="InterPro" id="IPR023954">
    <property type="entry name" value="C4_dicarb_transport"/>
</dbReference>
<dbReference type="InterPro" id="IPR001991">
    <property type="entry name" value="Na-dicarboxylate_symporter"/>
</dbReference>
<dbReference type="InterPro" id="IPR018107">
    <property type="entry name" value="Na-dicarboxylate_symporter_CS"/>
</dbReference>
<dbReference type="InterPro" id="IPR036458">
    <property type="entry name" value="Na:dicarbo_symporter_sf"/>
</dbReference>
<dbReference type="NCBIfam" id="NF002461">
    <property type="entry name" value="PRK01663.1"/>
    <property type="match status" value="1"/>
</dbReference>
<dbReference type="NCBIfam" id="NF009587">
    <property type="entry name" value="PRK13027.1"/>
    <property type="match status" value="1"/>
</dbReference>
<dbReference type="PANTHER" id="PTHR42865:SF1">
    <property type="entry name" value="AEROBIC C4-DICARBOXYLATE TRANSPORT PROTEIN"/>
    <property type="match status" value="1"/>
</dbReference>
<dbReference type="PANTHER" id="PTHR42865">
    <property type="entry name" value="PROTON/GLUTAMATE-ASPARTATE SYMPORTER"/>
    <property type="match status" value="1"/>
</dbReference>
<dbReference type="Pfam" id="PF00375">
    <property type="entry name" value="SDF"/>
    <property type="match status" value="1"/>
</dbReference>
<dbReference type="PRINTS" id="PR00173">
    <property type="entry name" value="EDTRNSPORT"/>
</dbReference>
<dbReference type="SUPFAM" id="SSF118215">
    <property type="entry name" value="Proton glutamate symport protein"/>
    <property type="match status" value="1"/>
</dbReference>
<dbReference type="PROSITE" id="PS00713">
    <property type="entry name" value="NA_DICARBOXYL_SYMP_1"/>
    <property type="match status" value="1"/>
</dbReference>
<dbReference type="PROSITE" id="PS00714">
    <property type="entry name" value="NA_DICARBOXYL_SYMP_2"/>
    <property type="match status" value="1"/>
</dbReference>
<organism>
    <name type="scientific">Verminephrobacter eiseniae (strain EF01-2)</name>
    <dbReference type="NCBI Taxonomy" id="391735"/>
    <lineage>
        <taxon>Bacteria</taxon>
        <taxon>Pseudomonadati</taxon>
        <taxon>Pseudomonadota</taxon>
        <taxon>Betaproteobacteria</taxon>
        <taxon>Burkholderiales</taxon>
        <taxon>Comamonadaceae</taxon>
        <taxon>Verminephrobacter</taxon>
    </lineage>
</organism>
<evidence type="ECO:0000255" key="1">
    <source>
        <dbReference type="HAMAP-Rule" id="MF_01300"/>
    </source>
</evidence>
<evidence type="ECO:0000256" key="2">
    <source>
        <dbReference type="SAM" id="MobiDB-lite"/>
    </source>
</evidence>
<sequence length="439" mass="46598">MTKAPLHKSLYVQVLAAIVIGVVLGHFYPPSGEAMKPLGDGFIKLIKMIIAPVIFCTVVLGIAGMEDMKKVGKTGGLALLYFEIVSTLALIVGLVLVNVLQPGAGMNIDPRTIDTKAITAYTGPGKMTGTVEFLLNIIPVSMVDAFAKGDILQVLLISVLFGFALHRFGGRGTMVFDFIEKVSQVLFAIVGTIMKAAPIGAFGAMAFTIGKYGIGSLLSLGKLMGTFYLTCLFFIFAVLGTITRLHGFSVWKFVKYIKEELLIVLGTSSSESVLPRMLSKMENLGAKKTVVGLVIPTGYSFNLDGTAIYLTMAAVFIAQATNTPMTLMQEVTLLAVLLLTSKGAAGITGSGFIVLAASLSAVGHLPVAGLALILGIDRFMSEARALTNTIGNGVASIVVAKWSKELDEQRLHAQLNGQTAEEASAPQALPDRMESRIHH</sequence>
<name>DCTA_VEREI</name>
<gene>
    <name evidence="1" type="primary">dctA</name>
    <name type="ordered locus">Veis_1840</name>
</gene>